<gene>
    <name evidence="1" type="primary">nadD</name>
    <name type="ordered locus">Gura_4130</name>
</gene>
<feature type="chain" id="PRO_1000078384" description="Probable nicotinate-nucleotide adenylyltransferase">
    <location>
        <begin position="1"/>
        <end position="216"/>
    </location>
</feature>
<protein>
    <recommendedName>
        <fullName evidence="1">Probable nicotinate-nucleotide adenylyltransferase</fullName>
        <ecNumber evidence="1">2.7.7.18</ecNumber>
    </recommendedName>
    <alternativeName>
        <fullName evidence="1">Deamido-NAD(+) diphosphorylase</fullName>
    </alternativeName>
    <alternativeName>
        <fullName evidence="1">Deamido-NAD(+) pyrophosphorylase</fullName>
    </alternativeName>
    <alternativeName>
        <fullName evidence="1">Nicotinate mononucleotide adenylyltransferase</fullName>
        <shortName evidence="1">NaMN adenylyltransferase</shortName>
    </alternativeName>
</protein>
<organism>
    <name type="scientific">Geotalea uraniireducens (strain Rf4)</name>
    <name type="common">Geobacter uraniireducens</name>
    <dbReference type="NCBI Taxonomy" id="351605"/>
    <lineage>
        <taxon>Bacteria</taxon>
        <taxon>Pseudomonadati</taxon>
        <taxon>Thermodesulfobacteriota</taxon>
        <taxon>Desulfuromonadia</taxon>
        <taxon>Geobacterales</taxon>
        <taxon>Geobacteraceae</taxon>
        <taxon>Geotalea</taxon>
    </lineage>
</organism>
<sequence length="216" mass="24101">MKIGILGGTFNPIHNAHLRIAEEVRDRFDLGRVMFVPAASPPHKPLAGELSFDVRYRMVQLAIADNPAFTISDVEGRRGGKSYSIDTLKGLHSAFPHDEFFFIVGSDSFLDIGSWREYAAIFNLCNIVVVERPGAAVAALDAALPVAIAHEFCYYEAEKRLAHRSGYSVYSIAGTLLDISSSDIRELARLGRSIRYLVPQSVEHYIKEQRIYNDAR</sequence>
<reference key="1">
    <citation type="submission" date="2007-05" db="EMBL/GenBank/DDBJ databases">
        <title>Complete sequence of Geobacter uraniireducens Rf4.</title>
        <authorList>
            <consortium name="US DOE Joint Genome Institute"/>
            <person name="Copeland A."/>
            <person name="Lucas S."/>
            <person name="Lapidus A."/>
            <person name="Barry K."/>
            <person name="Detter J.C."/>
            <person name="Glavina del Rio T."/>
            <person name="Hammon N."/>
            <person name="Israni S."/>
            <person name="Dalin E."/>
            <person name="Tice H."/>
            <person name="Pitluck S."/>
            <person name="Chertkov O."/>
            <person name="Brettin T."/>
            <person name="Bruce D."/>
            <person name="Han C."/>
            <person name="Schmutz J."/>
            <person name="Larimer F."/>
            <person name="Land M."/>
            <person name="Hauser L."/>
            <person name="Kyrpides N."/>
            <person name="Mikhailova N."/>
            <person name="Shelobolina E."/>
            <person name="Aklujkar M."/>
            <person name="Lovley D."/>
            <person name="Richardson P."/>
        </authorList>
    </citation>
    <scope>NUCLEOTIDE SEQUENCE [LARGE SCALE GENOMIC DNA]</scope>
    <source>
        <strain>ATCC BAA-1134 / JCM 13001 / Rf4</strain>
    </source>
</reference>
<comment type="function">
    <text evidence="1">Catalyzes the reversible adenylation of nicotinate mononucleotide (NaMN) to nicotinic acid adenine dinucleotide (NaAD).</text>
</comment>
<comment type="catalytic activity">
    <reaction evidence="1">
        <text>nicotinate beta-D-ribonucleotide + ATP + H(+) = deamido-NAD(+) + diphosphate</text>
        <dbReference type="Rhea" id="RHEA:22860"/>
        <dbReference type="ChEBI" id="CHEBI:15378"/>
        <dbReference type="ChEBI" id="CHEBI:30616"/>
        <dbReference type="ChEBI" id="CHEBI:33019"/>
        <dbReference type="ChEBI" id="CHEBI:57502"/>
        <dbReference type="ChEBI" id="CHEBI:58437"/>
        <dbReference type="EC" id="2.7.7.18"/>
    </reaction>
</comment>
<comment type="pathway">
    <text evidence="1">Cofactor biosynthesis; NAD(+) biosynthesis; deamido-NAD(+) from nicotinate D-ribonucleotide: step 1/1.</text>
</comment>
<comment type="similarity">
    <text evidence="1">Belongs to the NadD family.</text>
</comment>
<dbReference type="EC" id="2.7.7.18" evidence="1"/>
<dbReference type="EMBL" id="CP000698">
    <property type="protein sequence ID" value="ABQ28273.1"/>
    <property type="molecule type" value="Genomic_DNA"/>
</dbReference>
<dbReference type="RefSeq" id="WP_011940908.1">
    <property type="nucleotide sequence ID" value="NC_009483.1"/>
</dbReference>
<dbReference type="SMR" id="A5G905"/>
<dbReference type="STRING" id="351605.Gura_4130"/>
<dbReference type="KEGG" id="gur:Gura_4130"/>
<dbReference type="HOGENOM" id="CLU_069765_0_1_7"/>
<dbReference type="OrthoDB" id="5295945at2"/>
<dbReference type="UniPathway" id="UPA00253">
    <property type="reaction ID" value="UER00332"/>
</dbReference>
<dbReference type="Proteomes" id="UP000006695">
    <property type="component" value="Chromosome"/>
</dbReference>
<dbReference type="GO" id="GO:0005524">
    <property type="term" value="F:ATP binding"/>
    <property type="evidence" value="ECO:0007669"/>
    <property type="project" value="UniProtKB-KW"/>
</dbReference>
<dbReference type="GO" id="GO:0004515">
    <property type="term" value="F:nicotinate-nucleotide adenylyltransferase activity"/>
    <property type="evidence" value="ECO:0007669"/>
    <property type="project" value="UniProtKB-UniRule"/>
</dbReference>
<dbReference type="GO" id="GO:0009435">
    <property type="term" value="P:NAD biosynthetic process"/>
    <property type="evidence" value="ECO:0007669"/>
    <property type="project" value="UniProtKB-UniRule"/>
</dbReference>
<dbReference type="CDD" id="cd02165">
    <property type="entry name" value="NMNAT"/>
    <property type="match status" value="1"/>
</dbReference>
<dbReference type="Gene3D" id="3.40.50.620">
    <property type="entry name" value="HUPs"/>
    <property type="match status" value="1"/>
</dbReference>
<dbReference type="HAMAP" id="MF_00244">
    <property type="entry name" value="NaMN_adenylyltr"/>
    <property type="match status" value="1"/>
</dbReference>
<dbReference type="InterPro" id="IPR004821">
    <property type="entry name" value="Cyt_trans-like"/>
</dbReference>
<dbReference type="InterPro" id="IPR005248">
    <property type="entry name" value="NadD/NMNAT"/>
</dbReference>
<dbReference type="InterPro" id="IPR014729">
    <property type="entry name" value="Rossmann-like_a/b/a_fold"/>
</dbReference>
<dbReference type="NCBIfam" id="TIGR00125">
    <property type="entry name" value="cyt_tran_rel"/>
    <property type="match status" value="1"/>
</dbReference>
<dbReference type="NCBIfam" id="TIGR00482">
    <property type="entry name" value="nicotinate (nicotinamide) nucleotide adenylyltransferase"/>
    <property type="match status" value="1"/>
</dbReference>
<dbReference type="NCBIfam" id="NF000840">
    <property type="entry name" value="PRK00071.1-3"/>
    <property type="match status" value="1"/>
</dbReference>
<dbReference type="PANTHER" id="PTHR39321">
    <property type="entry name" value="NICOTINATE-NUCLEOTIDE ADENYLYLTRANSFERASE-RELATED"/>
    <property type="match status" value="1"/>
</dbReference>
<dbReference type="PANTHER" id="PTHR39321:SF3">
    <property type="entry name" value="PHOSPHOPANTETHEINE ADENYLYLTRANSFERASE"/>
    <property type="match status" value="1"/>
</dbReference>
<dbReference type="Pfam" id="PF01467">
    <property type="entry name" value="CTP_transf_like"/>
    <property type="match status" value="1"/>
</dbReference>
<dbReference type="SUPFAM" id="SSF52374">
    <property type="entry name" value="Nucleotidylyl transferase"/>
    <property type="match status" value="1"/>
</dbReference>
<evidence type="ECO:0000255" key="1">
    <source>
        <dbReference type="HAMAP-Rule" id="MF_00244"/>
    </source>
</evidence>
<keyword id="KW-0067">ATP-binding</keyword>
<keyword id="KW-0520">NAD</keyword>
<keyword id="KW-0547">Nucleotide-binding</keyword>
<keyword id="KW-0548">Nucleotidyltransferase</keyword>
<keyword id="KW-0662">Pyridine nucleotide biosynthesis</keyword>
<keyword id="KW-1185">Reference proteome</keyword>
<keyword id="KW-0808">Transferase</keyword>
<proteinExistence type="inferred from homology"/>
<accession>A5G905</accession>
<name>NADD_GEOUR</name>